<accession>P29084</accession>
<accession>D3DSV2</accession>
<accession>Q9H2B9</accession>
<keyword id="KW-0002">3D-structure</keyword>
<keyword id="KW-0007">Acetylation</keyword>
<keyword id="KW-0903">Direct protein sequencing</keyword>
<keyword id="KW-0225">Disease variant</keyword>
<keyword id="KW-0238">DNA-binding</keyword>
<keyword id="KW-0539">Nucleus</keyword>
<keyword id="KW-0597">Phosphoprotein</keyword>
<keyword id="KW-1267">Proteomics identification</keyword>
<keyword id="KW-1185">Reference proteome</keyword>
<keyword id="KW-0804">Transcription</keyword>
<keyword id="KW-0805">Transcription regulation</keyword>
<sequence>MDPSLLRERELFKKRALSTPVVEKRSASSESSSSSSKKKKTKVEHGGSSGSKQNSDHSNGSFNLKALSGSSGYKFGVLAKIVNYMKTRHQRGDTHPLTLDEILDETQHLDIGLKQKQWLMTEALVNNPKIEVIDGKYAFKPKYNVRDKKALLRLLDQHDQRGLGGILLEDIEEALPNSQKAVKALGDQILFVNRPDKKKILFFNDKSCQFSVDEEFQKLWRSVTVDSMDEEKIEEYLKRQGISSMQESGPKKVAPIQRRKKPASQKKRRFKTHNEHLAGVLKDYSDITSSK</sequence>
<feature type="chain" id="PRO_0000211226" description="Transcription initiation factor IIE subunit beta">
    <location>
        <begin position="1"/>
        <end position="291"/>
    </location>
</feature>
<feature type="DNA-binding region" description="TFIIE beta" evidence="2">
    <location>
        <begin position="66"/>
        <end position="146"/>
    </location>
</feature>
<feature type="region of interest" description="Disordered" evidence="3">
    <location>
        <begin position="1"/>
        <end position="63"/>
    </location>
</feature>
<feature type="region of interest" description="Disordered" evidence="3">
    <location>
        <begin position="243"/>
        <end position="272"/>
    </location>
</feature>
<feature type="compositionally biased region" description="Basic and acidic residues" evidence="3">
    <location>
        <begin position="1"/>
        <end position="13"/>
    </location>
</feature>
<feature type="compositionally biased region" description="Polar residues" evidence="3">
    <location>
        <begin position="50"/>
        <end position="62"/>
    </location>
</feature>
<feature type="compositionally biased region" description="Basic residues" evidence="3">
    <location>
        <begin position="257"/>
        <end position="271"/>
    </location>
</feature>
<feature type="modified residue" description="N-acetylmethionine" evidence="12">
    <location>
        <position position="1"/>
    </location>
</feature>
<feature type="modified residue" description="Phosphoserine" evidence="13">
    <location>
        <position position="61"/>
    </location>
</feature>
<feature type="modified residue" description="N6-acetyllysine" evidence="1">
    <location>
        <position position="74"/>
    </location>
</feature>
<feature type="sequence variant" id="VAR_052281" description="In dbSNP:rs2229299.">
    <original>I</original>
    <variation>T</variation>
    <location>
        <position position="133"/>
    </location>
</feature>
<feature type="sequence variant" id="VAR_076893" description="In TTD6; reduction in the levels of both TFIIE-alpha and TFIIE-beta subunits of the TFIIE complex in patient cells; reduced phosphorylation of TFIIE-alpha observed in patient cells; dbSNP:rs875989846." evidence="8">
    <original>A</original>
    <variation>P</variation>
    <location>
        <position position="150"/>
    </location>
</feature>
<feature type="sequence variant" id="VAR_039003" description="In dbSNP:rs2978277.">
    <original>K</original>
    <variation>R</variation>
    <location>
        <position position="183"/>
    </location>
</feature>
<feature type="sequence variant" id="VAR_076894" description="In TTD6; reduction in the levels of both TFIIE-alpha and TFIIE-beta subunits of the TFIIE complex in patient cells; reduced phosphorylation of TFIIE-alpha observed in patient cells; dbSNP:rs875989847." evidence="8">
    <original>D</original>
    <variation>Y</variation>
    <location>
        <position position="187"/>
    </location>
</feature>
<feature type="sequence conflict" description="In Ref. 3; AAG39077." evidence="11" ref="3">
    <original>Q</original>
    <variation>E</variation>
    <location>
        <position position="53"/>
    </location>
</feature>
<feature type="helix" evidence="14">
    <location>
        <begin position="67"/>
        <end position="70"/>
    </location>
</feature>
<feature type="strand" evidence="16">
    <location>
        <begin position="74"/>
        <end position="76"/>
    </location>
</feature>
<feature type="helix" evidence="16">
    <location>
        <begin position="77"/>
        <end position="90"/>
    </location>
</feature>
<feature type="helix" evidence="16">
    <location>
        <begin position="99"/>
        <end position="105"/>
    </location>
</feature>
<feature type="strand" evidence="14">
    <location>
        <begin position="109"/>
        <end position="111"/>
    </location>
</feature>
<feature type="helix" evidence="16">
    <location>
        <begin position="113"/>
        <end position="121"/>
    </location>
</feature>
<feature type="helix" evidence="16">
    <location>
        <begin position="123"/>
        <end position="126"/>
    </location>
</feature>
<feature type="strand" evidence="16">
    <location>
        <begin position="131"/>
        <end position="133"/>
    </location>
</feature>
<feature type="strand" evidence="16">
    <location>
        <begin position="136"/>
        <end position="138"/>
    </location>
</feature>
<feature type="turn" evidence="16">
    <location>
        <begin position="141"/>
        <end position="143"/>
    </location>
</feature>
<feature type="helix" evidence="15">
    <location>
        <begin position="148"/>
        <end position="161"/>
    </location>
</feature>
<feature type="helix" evidence="15">
    <location>
        <begin position="168"/>
        <end position="174"/>
    </location>
</feature>
<feature type="helix" evidence="15">
    <location>
        <begin position="178"/>
        <end position="184"/>
    </location>
</feature>
<feature type="helix" evidence="15">
    <location>
        <begin position="186"/>
        <end position="188"/>
    </location>
</feature>
<feature type="strand" evidence="15">
    <location>
        <begin position="189"/>
        <end position="193"/>
    </location>
</feature>
<feature type="strand" evidence="15">
    <location>
        <begin position="199"/>
        <end position="203"/>
    </location>
</feature>
<feature type="helix" evidence="15">
    <location>
        <begin position="214"/>
        <end position="221"/>
    </location>
</feature>
<feature type="strand" evidence="17">
    <location>
        <begin position="226"/>
        <end position="228"/>
    </location>
</feature>
<feature type="helix" evidence="15">
    <location>
        <begin position="230"/>
        <end position="240"/>
    </location>
</feature>
<reference key="1">
    <citation type="journal article" date="1991" name="Nature">
        <title>Structure and functional properties of human general transcription factor IIE.</title>
        <authorList>
            <person name="Peterson M.G."/>
            <person name="Inostroza J."/>
            <person name="Maxon M.E."/>
            <person name="Flores O."/>
            <person name="Admon A."/>
            <person name="Reinberg D."/>
            <person name="Tjian R."/>
        </authorList>
    </citation>
    <scope>NUCLEOTIDE SEQUENCE [MRNA]</scope>
    <scope>PARTIAL PROTEIN SEQUENCE</scope>
    <scope>FUNCTION</scope>
    <scope>SUBUNIT</scope>
</reference>
<reference key="2">
    <citation type="journal article" date="1991" name="Nature">
        <title>Conserved sequence motifs in the small subunit of human general transcription factor TFIIE.</title>
        <authorList>
            <person name="Sumimoto H."/>
            <person name="Ohkuma Y."/>
            <person name="Sinn E."/>
            <person name="Kato H."/>
            <person name="Shimasaki S."/>
            <person name="Horikoshi M."/>
            <person name="Roeder R.G."/>
        </authorList>
    </citation>
    <scope>NUCLEOTIDE SEQUENCE [MRNA]</scope>
    <scope>PARTIAL PROTEIN SEQUENCE</scope>
    <scope>FUNCTION</scope>
</reference>
<reference key="3">
    <citation type="submission" date="2000-08" db="EMBL/GenBank/DDBJ databases">
        <authorList>
            <person name="Schertzer M."/>
            <person name="Wood S."/>
        </authorList>
    </citation>
    <scope>NUCLEOTIDE SEQUENCE [GENOMIC DNA]</scope>
</reference>
<reference key="4">
    <citation type="submission" date="2005-09" db="EMBL/GenBank/DDBJ databases">
        <authorList>
            <person name="Mural R.J."/>
            <person name="Istrail S."/>
            <person name="Sutton G.G."/>
            <person name="Florea L."/>
            <person name="Halpern A.L."/>
            <person name="Mobarry C.M."/>
            <person name="Lippert R."/>
            <person name="Walenz B."/>
            <person name="Shatkay H."/>
            <person name="Dew I."/>
            <person name="Miller J.R."/>
            <person name="Flanigan M.J."/>
            <person name="Edwards N.J."/>
            <person name="Bolanos R."/>
            <person name="Fasulo D."/>
            <person name="Halldorsson B.V."/>
            <person name="Hannenhalli S."/>
            <person name="Turner R."/>
            <person name="Yooseph S."/>
            <person name="Lu F."/>
            <person name="Nusskern D.R."/>
            <person name="Shue B.C."/>
            <person name="Zheng X.H."/>
            <person name="Zhong F."/>
            <person name="Delcher A.L."/>
            <person name="Huson D.H."/>
            <person name="Kravitz S.A."/>
            <person name="Mouchard L."/>
            <person name="Reinert K."/>
            <person name="Remington K.A."/>
            <person name="Clark A.G."/>
            <person name="Waterman M.S."/>
            <person name="Eichler E.E."/>
            <person name="Adams M.D."/>
            <person name="Hunkapiller M.W."/>
            <person name="Myers E.W."/>
            <person name="Venter J.C."/>
        </authorList>
    </citation>
    <scope>NUCLEOTIDE SEQUENCE [LARGE SCALE GENOMIC DNA]</scope>
</reference>
<reference key="5">
    <citation type="journal article" date="2004" name="Genome Res.">
        <title>The status, quality, and expansion of the NIH full-length cDNA project: the Mammalian Gene Collection (MGC).</title>
        <authorList>
            <consortium name="The MGC Project Team"/>
        </authorList>
    </citation>
    <scope>NUCLEOTIDE SEQUENCE [LARGE SCALE MRNA]</scope>
    <source>
        <tissue>Skin</tissue>
    </source>
</reference>
<reference key="6">
    <citation type="journal article" date="1995" name="Mol. Cell. Biol.">
        <title>The Epstein-Barr virus nuclear protein 2 acidic domain forms a complex with a novel cellular coactivator that can interact with TFIIE.</title>
        <authorList>
            <person name="Tong X."/>
            <person name="Drapkin R."/>
            <person name="Yalamanchili R."/>
            <person name="Mosialos G."/>
            <person name="Kieff E."/>
        </authorList>
    </citation>
    <scope>INTERACTION WITH SND1</scope>
    <scope>SUBCELLULAR LOCATION</scope>
</reference>
<reference key="7">
    <citation type="journal article" date="2000" name="Genes Cells">
        <title>Functional interaction of general transcription initiation factor TFIIE with general chromatin factor SPT16/CDC68.</title>
        <authorList>
            <person name="Kang S.-W."/>
            <person name="Kuzuhara T."/>
            <person name="Horikoshi M."/>
        </authorList>
    </citation>
    <scope>INTERACTION WITH SUPT16H</scope>
</reference>
<reference key="8">
    <citation type="journal article" date="2009" name="J. Biol. Chem.">
        <title>MCAF1/AM is involved in Sp1-mediated maintenance of cancer-associated telomerase activity.</title>
        <authorList>
            <person name="Liu L."/>
            <person name="Ishihara K."/>
            <person name="Ichimura T."/>
            <person name="Fujita N."/>
            <person name="Hino S."/>
            <person name="Tomita S."/>
            <person name="Watanabe S."/>
            <person name="Saitoh N."/>
            <person name="Ito T."/>
            <person name="Nakao M."/>
        </authorList>
    </citation>
    <scope>INTERACTION WITH ATF7IP</scope>
</reference>
<reference key="9">
    <citation type="journal article" date="2011" name="BMC Syst. Biol.">
        <title>Initial characterization of the human central proteome.</title>
        <authorList>
            <person name="Burkard T.R."/>
            <person name="Planyavsky M."/>
            <person name="Kaupe I."/>
            <person name="Breitwieser F.P."/>
            <person name="Buerckstuemmer T."/>
            <person name="Bennett K.L."/>
            <person name="Superti-Furga G."/>
            <person name="Colinge J."/>
        </authorList>
    </citation>
    <scope>IDENTIFICATION BY MASS SPECTROMETRY [LARGE SCALE ANALYSIS]</scope>
</reference>
<reference key="10">
    <citation type="journal article" date="2012" name="Proc. Natl. Acad. Sci. U.S.A.">
        <title>N-terminal acetylome analyses and functional insights of the N-terminal acetyltransferase NatB.</title>
        <authorList>
            <person name="Van Damme P."/>
            <person name="Lasa M."/>
            <person name="Polevoda B."/>
            <person name="Gazquez C."/>
            <person name="Elosegui-Artola A."/>
            <person name="Kim D.S."/>
            <person name="De Juan-Pardo E."/>
            <person name="Demeyer K."/>
            <person name="Hole K."/>
            <person name="Larrea E."/>
            <person name="Timmerman E."/>
            <person name="Prieto J."/>
            <person name="Arnesen T."/>
            <person name="Sherman F."/>
            <person name="Gevaert K."/>
            <person name="Aldabe R."/>
        </authorList>
    </citation>
    <scope>ACETYLATION [LARGE SCALE ANALYSIS] AT MET-1</scope>
    <scope>IDENTIFICATION BY MASS SPECTROMETRY [LARGE SCALE ANALYSIS]</scope>
</reference>
<reference key="11">
    <citation type="journal article" date="2013" name="J. Proteome Res.">
        <title>Toward a comprehensive characterization of a human cancer cell phosphoproteome.</title>
        <authorList>
            <person name="Zhou H."/>
            <person name="Di Palma S."/>
            <person name="Preisinger C."/>
            <person name="Peng M."/>
            <person name="Polat A.N."/>
            <person name="Heck A.J."/>
            <person name="Mohammed S."/>
        </authorList>
    </citation>
    <scope>PHOSPHORYLATION [LARGE SCALE ANALYSIS] AT SER-61</scope>
    <scope>IDENTIFICATION BY MASS SPECTROMETRY [LARGE SCALE ANALYSIS]</scope>
    <source>
        <tissue>Erythroleukemia</tissue>
    </source>
</reference>
<reference key="12">
    <citation type="journal article" date="2016" name="Am. J. Hum. Genet.">
        <title>GTF2E2 mutations destabilize the general transcription factor complex TFIIE in individuals with DNA repair-proficient trichothiodystrophy.</title>
        <authorList>
            <person name="Kuschal C."/>
            <person name="Botta E."/>
            <person name="Orioli D."/>
            <person name="Digiovanna J.J."/>
            <person name="Seneca S."/>
            <person name="Keymolen K."/>
            <person name="Tamura D."/>
            <person name="Heller E."/>
            <person name="Khan S.G."/>
            <person name="Caligiuri G."/>
            <person name="Lanzafame M."/>
            <person name="Nardo T."/>
            <person name="Ricotti R."/>
            <person name="Peverali F.A."/>
            <person name="Stephens R."/>
            <person name="Zhao Y."/>
            <person name="Lehmann A.R."/>
            <person name="Baranello L."/>
            <person name="Levens D."/>
            <person name="Kraemer K.H."/>
            <person name="Stefanini M."/>
        </authorList>
    </citation>
    <scope>INVOLVEMENT IN TTD6</scope>
    <scope>VARIANTS TTD6 PRO-150 AND TYR-187</scope>
    <scope>CHARACTERIZATION OF VARIANTS TTD6 PRO-150 AND TYR-187</scope>
</reference>
<reference key="13">
    <citation type="journal article" date="2016" name="Nature">
        <title>Near-atomic resolution visualization of human transcription promoter opening.</title>
        <authorList>
            <person name="He Y."/>
            <person name="Yan C."/>
            <person name="Fang J."/>
            <person name="Inouye C."/>
            <person name="Tjian R."/>
            <person name="Ivanov I."/>
            <person name="Nogales E."/>
        </authorList>
    </citation>
    <scope>STRUCTURE BY ELECTRON MICROSCOPY (3.90 ANGSTROMS)</scope>
    <scope>SUBUNIT</scope>
</reference>
<comment type="function">
    <text evidence="6 7">Recruits TFIIH to the initiation complex and stimulates the RNA polymerase II C-terminal domain kinase and DNA-dependent ATPase activities of TFIIH. Both TFIIH and TFIIE are required for promoter clearance by RNA polymerase.</text>
</comment>
<comment type="subunit">
    <text evidence="4 5 6 9 10">Tetramer of two alpha and two beta chains (PubMed:1956398). Interacts with FACT subunit SUPT16H (PubMed:10792464). Interacts with ATF7IP (PubMed:19106100). Interacts with SND1 (PubMed:7651391). Part of TBP-based Pol II pre-initiation complex (PIC), in which Pol II core assembles with general transcription factors and other specific initiation factors including GTF2E1, GTF2E2, GTF2F1, GTF2F2, TCEA1, ERCC2, ERCC3, GTF2H2, GTF2H3, GTF2H4, GTF2H5, GTF2A1, GTF2A2, GTF2B and TBP; this large multi-subunit PIC complex mediates DNA unwinding and targets Pol II core to the transcription start site where the first phosphodiester bond forms.</text>
</comment>
<comment type="interaction">
    <interactant intactId="EBI-2853321">
        <id>P29084</id>
    </interactant>
    <interactant intactId="EBI-742102">
        <id>Q8IYI6</id>
        <label>EXOC8</label>
    </interactant>
    <organismsDiffer>false</organismsDiffer>
    <experiments>5</experiments>
</comment>
<comment type="interaction">
    <interactant intactId="EBI-2853321">
        <id>P29084</id>
    </interactant>
    <interactant intactId="EBI-5462215">
        <id>P29083</id>
        <label>GTF2E1</label>
    </interactant>
    <organismsDiffer>false</organismsDiffer>
    <experiments>8</experiments>
</comment>
<comment type="interaction">
    <interactant intactId="EBI-2853321">
        <id>P29084</id>
    </interactant>
    <interactant intactId="EBI-399080">
        <id>Q92993</id>
        <label>KAT5</label>
    </interactant>
    <organismsDiffer>false</organismsDiffer>
    <experiments>3</experiments>
</comment>
<comment type="interaction">
    <interactant intactId="EBI-2853321">
        <id>P29084</id>
    </interactant>
    <interactant intactId="EBI-307531">
        <id>P23508</id>
        <label>MCC</label>
    </interactant>
    <organismsDiffer>false</organismsDiffer>
    <experiments>2</experiments>
</comment>
<comment type="interaction">
    <interactant intactId="EBI-2853321">
        <id>P29084</id>
    </interactant>
    <interactant intactId="EBI-79165">
        <id>Q9NRD5</id>
        <label>PICK1</label>
    </interactant>
    <organismsDiffer>false</organismsDiffer>
    <experiments>3</experiments>
</comment>
<comment type="subcellular location">
    <subcellularLocation>
        <location evidence="10">Nucleus</location>
    </subcellularLocation>
</comment>
<comment type="disease" evidence="8">
    <disease id="DI-04720">
        <name>Trichothiodystrophy 6, non-photosensitive</name>
        <acronym>TTD6</acronym>
        <description>A form of trichothiodystrophy, a disease characterized by sulfur-deficient brittle hair and multisystem variable abnormalities. The spectrum of clinical features varies from mild disease with only hair involvement to severe disease with cutaneous, neurologic and profound developmental defects. Ichthyosis, intellectual and developmental disabilities, decreased fertility, abnormal characteristics at birth, ocular abnormalities, short stature, and infections are common manifestations. There are both photosensitive and non-photosensitive forms of the disorder. TTD6 patients do not manifest cutaneous photosensitivity. Inheritance pattern has been reported to be autosomal recessive.</description>
        <dbReference type="MIM" id="616943"/>
    </disease>
    <text>The disease is caused by variants affecting the gene represented in this entry.</text>
</comment>
<comment type="similarity">
    <text evidence="2">Belongs to the TFIIE beta subunit family.</text>
</comment>
<dbReference type="EMBL" id="S67861">
    <property type="protein sequence ID" value="AAB20414.1"/>
    <property type="molecule type" value="mRNA"/>
</dbReference>
<dbReference type="EMBL" id="X63469">
    <property type="protein sequence ID" value="CAA45069.1"/>
    <property type="molecule type" value="mRNA"/>
</dbReference>
<dbReference type="EMBL" id="AF292062">
    <property type="protein sequence ID" value="AAG39077.1"/>
    <property type="molecule type" value="Genomic_DNA"/>
</dbReference>
<dbReference type="EMBL" id="AF292056">
    <property type="protein sequence ID" value="AAG39077.1"/>
    <property type="status" value="JOINED"/>
    <property type="molecule type" value="Genomic_DNA"/>
</dbReference>
<dbReference type="EMBL" id="AF292057">
    <property type="protein sequence ID" value="AAG39077.1"/>
    <property type="status" value="JOINED"/>
    <property type="molecule type" value="Genomic_DNA"/>
</dbReference>
<dbReference type="EMBL" id="AF292058">
    <property type="protein sequence ID" value="AAG39077.1"/>
    <property type="status" value="JOINED"/>
    <property type="molecule type" value="Genomic_DNA"/>
</dbReference>
<dbReference type="EMBL" id="AF292059">
    <property type="protein sequence ID" value="AAG39077.1"/>
    <property type="status" value="JOINED"/>
    <property type="molecule type" value="Genomic_DNA"/>
</dbReference>
<dbReference type="EMBL" id="AF292060">
    <property type="protein sequence ID" value="AAG39077.1"/>
    <property type="status" value="JOINED"/>
    <property type="molecule type" value="Genomic_DNA"/>
</dbReference>
<dbReference type="EMBL" id="AF292061">
    <property type="protein sequence ID" value="AAG39077.1"/>
    <property type="status" value="JOINED"/>
    <property type="molecule type" value="Genomic_DNA"/>
</dbReference>
<dbReference type="EMBL" id="CH471080">
    <property type="protein sequence ID" value="EAW63446.1"/>
    <property type="molecule type" value="Genomic_DNA"/>
</dbReference>
<dbReference type="EMBL" id="CH471080">
    <property type="protein sequence ID" value="EAW63449.1"/>
    <property type="molecule type" value="Genomic_DNA"/>
</dbReference>
<dbReference type="EMBL" id="BC030572">
    <property type="protein sequence ID" value="AAH30572.1"/>
    <property type="molecule type" value="mRNA"/>
</dbReference>
<dbReference type="CCDS" id="CCDS6078.1"/>
<dbReference type="PIR" id="S29292">
    <property type="entry name" value="S29292"/>
</dbReference>
<dbReference type="RefSeq" id="NP_002086.1">
    <property type="nucleotide sequence ID" value="NM_002095.6"/>
</dbReference>
<dbReference type="RefSeq" id="XP_016868852.1">
    <property type="nucleotide sequence ID" value="XM_017013363.2"/>
</dbReference>
<dbReference type="RefSeq" id="XP_016868853.1">
    <property type="nucleotide sequence ID" value="XM_017013364.2"/>
</dbReference>
<dbReference type="RefSeq" id="XP_024302906.1">
    <property type="nucleotide sequence ID" value="XM_024447138.2"/>
</dbReference>
<dbReference type="RefSeq" id="XP_054216346.1">
    <property type="nucleotide sequence ID" value="XM_054360371.1"/>
</dbReference>
<dbReference type="RefSeq" id="XP_054216347.1">
    <property type="nucleotide sequence ID" value="XM_054360372.1"/>
</dbReference>
<dbReference type="RefSeq" id="XP_054216348.1">
    <property type="nucleotide sequence ID" value="XM_054360373.1"/>
</dbReference>
<dbReference type="PDB" id="1D8J">
    <property type="method" value="NMR"/>
    <property type="chains" value="A=66-146"/>
</dbReference>
<dbReference type="PDB" id="1D8K">
    <property type="method" value="NMR"/>
    <property type="chains" value="A=66-146"/>
</dbReference>
<dbReference type="PDB" id="5GPY">
    <property type="method" value="X-ray"/>
    <property type="resolution" value="2.10 A"/>
    <property type="chains" value="B=141-244"/>
</dbReference>
<dbReference type="PDB" id="5IY6">
    <property type="method" value="EM"/>
    <property type="resolution" value="7.20 A"/>
    <property type="chains" value="R=1-291"/>
</dbReference>
<dbReference type="PDB" id="5IY7">
    <property type="method" value="EM"/>
    <property type="resolution" value="8.60 A"/>
    <property type="chains" value="R=1-291"/>
</dbReference>
<dbReference type="PDB" id="5IY8">
    <property type="method" value="EM"/>
    <property type="resolution" value="7.90 A"/>
    <property type="chains" value="R=1-291"/>
</dbReference>
<dbReference type="PDB" id="5IY9">
    <property type="method" value="EM"/>
    <property type="resolution" value="6.30 A"/>
    <property type="chains" value="R=1-291"/>
</dbReference>
<dbReference type="PDB" id="5IYA">
    <property type="method" value="EM"/>
    <property type="resolution" value="5.40 A"/>
    <property type="chains" value="R=1-291"/>
</dbReference>
<dbReference type="PDB" id="5IYB">
    <property type="method" value="EM"/>
    <property type="resolution" value="3.90 A"/>
    <property type="chains" value="R=1-291"/>
</dbReference>
<dbReference type="PDB" id="5IYC">
    <property type="method" value="EM"/>
    <property type="resolution" value="3.90 A"/>
    <property type="chains" value="R=1-291"/>
</dbReference>
<dbReference type="PDB" id="5IYD">
    <property type="method" value="EM"/>
    <property type="resolution" value="3.90 A"/>
    <property type="chains" value="R=1-291"/>
</dbReference>
<dbReference type="PDB" id="6O9L">
    <property type="method" value="EM"/>
    <property type="resolution" value="7.20 A"/>
    <property type="chains" value="R=1-291"/>
</dbReference>
<dbReference type="PDB" id="7EG9">
    <property type="method" value="EM"/>
    <property type="resolution" value="3.70 A"/>
    <property type="chains" value="V=1-291"/>
</dbReference>
<dbReference type="PDB" id="7EGA">
    <property type="method" value="EM"/>
    <property type="resolution" value="4.10 A"/>
    <property type="chains" value="V=1-291"/>
</dbReference>
<dbReference type="PDB" id="7EGB">
    <property type="method" value="EM"/>
    <property type="resolution" value="3.30 A"/>
    <property type="chains" value="V=1-291"/>
</dbReference>
<dbReference type="PDB" id="7EGC">
    <property type="method" value="EM"/>
    <property type="resolution" value="3.90 A"/>
    <property type="chains" value="V=1-291"/>
</dbReference>
<dbReference type="PDB" id="7ENA">
    <property type="method" value="EM"/>
    <property type="resolution" value="4.07 A"/>
    <property type="chains" value="EB=1-291"/>
</dbReference>
<dbReference type="PDB" id="7ENC">
    <property type="method" value="EM"/>
    <property type="resolution" value="4.13 A"/>
    <property type="chains" value="EB=1-291"/>
</dbReference>
<dbReference type="PDB" id="7LBM">
    <property type="method" value="EM"/>
    <property type="resolution" value="4.80 A"/>
    <property type="chains" value="R=1-291"/>
</dbReference>
<dbReference type="PDB" id="7NVR">
    <property type="method" value="EM"/>
    <property type="resolution" value="4.50 A"/>
    <property type="chains" value="X=1-291"/>
</dbReference>
<dbReference type="PDB" id="7NVS">
    <property type="method" value="EM"/>
    <property type="resolution" value="2.80 A"/>
    <property type="chains" value="X=1-291"/>
</dbReference>
<dbReference type="PDB" id="7NVT">
    <property type="method" value="EM"/>
    <property type="resolution" value="2.90 A"/>
    <property type="chains" value="X=1-291"/>
</dbReference>
<dbReference type="PDB" id="7NVU">
    <property type="method" value="EM"/>
    <property type="resolution" value="2.50 A"/>
    <property type="chains" value="X=1-291"/>
</dbReference>
<dbReference type="PDB" id="7NVY">
    <property type="method" value="EM"/>
    <property type="resolution" value="7.30 A"/>
    <property type="chains" value="X=1-291"/>
</dbReference>
<dbReference type="PDB" id="7NVZ">
    <property type="method" value="EM"/>
    <property type="resolution" value="7.20 A"/>
    <property type="chains" value="X=1-291"/>
</dbReference>
<dbReference type="PDB" id="7NW0">
    <property type="method" value="EM"/>
    <property type="resolution" value="6.60 A"/>
    <property type="chains" value="X=1-291"/>
</dbReference>
<dbReference type="PDB" id="8BVW">
    <property type="method" value="EM"/>
    <property type="resolution" value="4.00 A"/>
    <property type="chains" value="X=1-291"/>
</dbReference>
<dbReference type="PDB" id="8BYQ">
    <property type="method" value="EM"/>
    <property type="resolution" value="4.10 A"/>
    <property type="chains" value="X=1-291"/>
</dbReference>
<dbReference type="PDB" id="8GXQ">
    <property type="method" value="EM"/>
    <property type="resolution" value="5.04 A"/>
    <property type="chains" value="EB=1-291"/>
</dbReference>
<dbReference type="PDB" id="8GXS">
    <property type="method" value="EM"/>
    <property type="resolution" value="4.16 A"/>
    <property type="chains" value="EB=1-291"/>
</dbReference>
<dbReference type="PDB" id="8S51">
    <property type="method" value="EM"/>
    <property type="resolution" value="3.10 A"/>
    <property type="chains" value="X=1-291"/>
</dbReference>
<dbReference type="PDB" id="8S52">
    <property type="method" value="EM"/>
    <property type="resolution" value="2.90 A"/>
    <property type="chains" value="X=1-291"/>
</dbReference>
<dbReference type="PDB" id="8S55">
    <property type="method" value="EM"/>
    <property type="resolution" value="3.40 A"/>
    <property type="chains" value="X=1-291"/>
</dbReference>
<dbReference type="PDB" id="8S5N">
    <property type="method" value="EM"/>
    <property type="resolution" value="3.40 A"/>
    <property type="chains" value="X=1-291"/>
</dbReference>
<dbReference type="PDB" id="8WAK">
    <property type="method" value="EM"/>
    <property type="resolution" value="5.47 A"/>
    <property type="chains" value="V=1-291"/>
</dbReference>
<dbReference type="PDB" id="8WAL">
    <property type="method" value="EM"/>
    <property type="resolution" value="8.52 A"/>
    <property type="chains" value="V=1-291"/>
</dbReference>
<dbReference type="PDB" id="8WAN">
    <property type="method" value="EM"/>
    <property type="resolution" value="6.07 A"/>
    <property type="chains" value="V=1-291"/>
</dbReference>
<dbReference type="PDB" id="8WAO">
    <property type="method" value="EM"/>
    <property type="resolution" value="6.40 A"/>
    <property type="chains" value="V=1-291"/>
</dbReference>
<dbReference type="PDB" id="8WAP">
    <property type="method" value="EM"/>
    <property type="resolution" value="5.85 A"/>
    <property type="chains" value="V=1-291"/>
</dbReference>
<dbReference type="PDB" id="8WAQ">
    <property type="method" value="EM"/>
    <property type="resolution" value="6.29 A"/>
    <property type="chains" value="V=1-291"/>
</dbReference>
<dbReference type="PDB" id="8WAR">
    <property type="method" value="EM"/>
    <property type="resolution" value="7.20 A"/>
    <property type="chains" value="V=1-291"/>
</dbReference>
<dbReference type="PDB" id="8WAS">
    <property type="method" value="EM"/>
    <property type="resolution" value="6.13 A"/>
    <property type="chains" value="V=1-291"/>
</dbReference>
<dbReference type="PDBsum" id="1D8J"/>
<dbReference type="PDBsum" id="1D8K"/>
<dbReference type="PDBsum" id="5GPY"/>
<dbReference type="PDBsum" id="5IY6"/>
<dbReference type="PDBsum" id="5IY7"/>
<dbReference type="PDBsum" id="5IY8"/>
<dbReference type="PDBsum" id="5IY9"/>
<dbReference type="PDBsum" id="5IYA"/>
<dbReference type="PDBsum" id="5IYB"/>
<dbReference type="PDBsum" id="5IYC"/>
<dbReference type="PDBsum" id="5IYD"/>
<dbReference type="PDBsum" id="6O9L"/>
<dbReference type="PDBsum" id="7EG9"/>
<dbReference type="PDBsum" id="7EGA"/>
<dbReference type="PDBsum" id="7EGB"/>
<dbReference type="PDBsum" id="7EGC"/>
<dbReference type="PDBsum" id="7ENA"/>
<dbReference type="PDBsum" id="7ENC"/>
<dbReference type="PDBsum" id="7LBM"/>
<dbReference type="PDBsum" id="7NVR"/>
<dbReference type="PDBsum" id="7NVS"/>
<dbReference type="PDBsum" id="7NVT"/>
<dbReference type="PDBsum" id="7NVU"/>
<dbReference type="PDBsum" id="7NVY"/>
<dbReference type="PDBsum" id="7NVZ"/>
<dbReference type="PDBsum" id="7NW0"/>
<dbReference type="PDBsum" id="8BVW"/>
<dbReference type="PDBsum" id="8BYQ"/>
<dbReference type="PDBsum" id="8GXQ"/>
<dbReference type="PDBsum" id="8GXS"/>
<dbReference type="PDBsum" id="8S51"/>
<dbReference type="PDBsum" id="8S52"/>
<dbReference type="PDBsum" id="8S55"/>
<dbReference type="PDBsum" id="8S5N"/>
<dbReference type="PDBsum" id="8WAK"/>
<dbReference type="PDBsum" id="8WAL"/>
<dbReference type="PDBsum" id="8WAN"/>
<dbReference type="PDBsum" id="8WAO"/>
<dbReference type="PDBsum" id="8WAP"/>
<dbReference type="PDBsum" id="8WAQ"/>
<dbReference type="PDBsum" id="8WAR"/>
<dbReference type="PDBsum" id="8WAS"/>
<dbReference type="BMRB" id="P29084"/>
<dbReference type="EMDB" id="EMD-12610"/>
<dbReference type="EMDB" id="EMD-12611"/>
<dbReference type="EMDB" id="EMD-12612"/>
<dbReference type="EMDB" id="EMD-12613"/>
<dbReference type="EMDB" id="EMD-12617"/>
<dbReference type="EMDB" id="EMD-12618"/>
<dbReference type="EMDB" id="EMD-12619"/>
<dbReference type="EMDB" id="EMD-16274"/>
<dbReference type="EMDB" id="EMD-16331"/>
<dbReference type="EMDB" id="EMD-19718"/>
<dbReference type="EMDB" id="EMD-19719"/>
<dbReference type="EMDB" id="EMD-19726"/>
<dbReference type="EMDB" id="EMD-19743"/>
<dbReference type="EMDB" id="EMD-23255"/>
<dbReference type="EMDB" id="EMD-31109"/>
<dbReference type="EMDB" id="EMD-31110"/>
<dbReference type="EMDB" id="EMD-31111"/>
<dbReference type="EMDB" id="EMD-31112"/>
<dbReference type="EMDB" id="EMD-31204"/>
<dbReference type="EMDB" id="EMD-31207"/>
<dbReference type="EMDB" id="EMD-34359"/>
<dbReference type="EMDB" id="EMD-34360"/>
<dbReference type="EMDB" id="EMD-37395"/>
<dbReference type="EMDB" id="EMD-37396"/>
<dbReference type="EMDB" id="EMD-37398"/>
<dbReference type="EMDB" id="EMD-37399"/>
<dbReference type="EMDB" id="EMD-37400"/>
<dbReference type="EMDB" id="EMD-37401"/>
<dbReference type="EMDB" id="EMD-37402"/>
<dbReference type="EMDB" id="EMD-37403"/>
<dbReference type="EMDB" id="EMD-8132"/>
<dbReference type="EMDB" id="EMD-8133"/>
<dbReference type="EMDB" id="EMD-8134"/>
<dbReference type="EMDB" id="EMD-8135"/>
<dbReference type="EMDB" id="EMD-8136"/>
<dbReference type="EMDB" id="EMD-8137"/>
<dbReference type="EMDB" id="EMD-8138"/>
<dbReference type="SMR" id="P29084"/>
<dbReference type="BioGRID" id="109216">
    <property type="interactions" value="185"/>
</dbReference>
<dbReference type="ComplexPortal" id="CPX-2394">
    <property type="entry name" value="General transcription factor TFIIE complex"/>
</dbReference>
<dbReference type="CORUM" id="P29084"/>
<dbReference type="DIP" id="DIP-716N"/>
<dbReference type="FunCoup" id="P29084">
    <property type="interactions" value="3275"/>
</dbReference>
<dbReference type="IntAct" id="P29084">
    <property type="interactions" value="110"/>
</dbReference>
<dbReference type="MINT" id="P29084"/>
<dbReference type="STRING" id="9606.ENSP00000348168"/>
<dbReference type="GlyGen" id="P29084">
    <property type="glycosylation" value="1 site, 1 O-linked glycan (1 site)"/>
</dbReference>
<dbReference type="iPTMnet" id="P29084"/>
<dbReference type="MetOSite" id="P29084"/>
<dbReference type="PhosphoSitePlus" id="P29084"/>
<dbReference type="BioMuta" id="GTF2E2"/>
<dbReference type="DMDM" id="135232"/>
<dbReference type="jPOST" id="P29084"/>
<dbReference type="MassIVE" id="P29084"/>
<dbReference type="PaxDb" id="9606-ENSP00000348168"/>
<dbReference type="PeptideAtlas" id="P29084"/>
<dbReference type="ProteomicsDB" id="54518"/>
<dbReference type="Pumba" id="P29084"/>
<dbReference type="Antibodypedia" id="4040">
    <property type="antibodies" value="283 antibodies from 32 providers"/>
</dbReference>
<dbReference type="DNASU" id="2961"/>
<dbReference type="Ensembl" id="ENST00000355904.9">
    <property type="protein sequence ID" value="ENSP00000348168.4"/>
    <property type="gene ID" value="ENSG00000197265.9"/>
</dbReference>
<dbReference type="GeneID" id="2961"/>
<dbReference type="KEGG" id="hsa:2961"/>
<dbReference type="MANE-Select" id="ENST00000355904.9">
    <property type="protein sequence ID" value="ENSP00000348168.4"/>
    <property type="RefSeq nucleotide sequence ID" value="NM_002095.6"/>
    <property type="RefSeq protein sequence ID" value="NP_002086.1"/>
</dbReference>
<dbReference type="UCSC" id="uc003xig.4">
    <property type="organism name" value="human"/>
</dbReference>
<dbReference type="AGR" id="HGNC:4651"/>
<dbReference type="CTD" id="2961"/>
<dbReference type="DisGeNET" id="2961"/>
<dbReference type="GeneCards" id="GTF2E2"/>
<dbReference type="HGNC" id="HGNC:4651">
    <property type="gene designation" value="GTF2E2"/>
</dbReference>
<dbReference type="HPA" id="ENSG00000197265">
    <property type="expression patterns" value="Low tissue specificity"/>
</dbReference>
<dbReference type="MalaCards" id="GTF2E2"/>
<dbReference type="MIM" id="189964">
    <property type="type" value="gene"/>
</dbReference>
<dbReference type="MIM" id="616943">
    <property type="type" value="phenotype"/>
</dbReference>
<dbReference type="neXtProt" id="NX_P29084"/>
<dbReference type="OpenTargets" id="ENSG00000197265"/>
<dbReference type="Orphanet" id="33364">
    <property type="disease" value="Trichothiodystrophy"/>
</dbReference>
<dbReference type="PharmGKB" id="PA29037"/>
<dbReference type="VEuPathDB" id="HostDB:ENSG00000197265"/>
<dbReference type="eggNOG" id="KOG3095">
    <property type="taxonomic scope" value="Eukaryota"/>
</dbReference>
<dbReference type="GeneTree" id="ENSGT00390000011749"/>
<dbReference type="HOGENOM" id="CLU_086770_0_0_1"/>
<dbReference type="InParanoid" id="P29084"/>
<dbReference type="OMA" id="AFKRRAM"/>
<dbReference type="OrthoDB" id="5323195at2759"/>
<dbReference type="PAN-GO" id="P29084">
    <property type="GO annotations" value="2 GO annotations based on evolutionary models"/>
</dbReference>
<dbReference type="PhylomeDB" id="P29084"/>
<dbReference type="TreeFam" id="TF105901"/>
<dbReference type="PathwayCommons" id="P29084"/>
<dbReference type="Reactome" id="R-HSA-167161">
    <property type="pathway name" value="HIV Transcription Initiation"/>
</dbReference>
<dbReference type="Reactome" id="R-HSA-167162">
    <property type="pathway name" value="RNA Polymerase II HIV Promoter Escape"/>
</dbReference>
<dbReference type="Reactome" id="R-HSA-167172">
    <property type="pathway name" value="Transcription of the HIV genome"/>
</dbReference>
<dbReference type="Reactome" id="R-HSA-674695">
    <property type="pathway name" value="RNA Polymerase II Pre-transcription Events"/>
</dbReference>
<dbReference type="Reactome" id="R-HSA-6807505">
    <property type="pathway name" value="RNA polymerase II transcribes snRNA genes"/>
</dbReference>
<dbReference type="Reactome" id="R-HSA-73776">
    <property type="pathway name" value="RNA Polymerase II Promoter Escape"/>
</dbReference>
<dbReference type="Reactome" id="R-HSA-73779">
    <property type="pathway name" value="RNA Polymerase II Transcription Pre-Initiation And Promoter Opening"/>
</dbReference>
<dbReference type="Reactome" id="R-HSA-75953">
    <property type="pathway name" value="RNA Polymerase II Transcription Initiation"/>
</dbReference>
<dbReference type="Reactome" id="R-HSA-76042">
    <property type="pathway name" value="RNA Polymerase II Transcription Initiation And Promoter Clearance"/>
</dbReference>
<dbReference type="SignaLink" id="P29084"/>
<dbReference type="SIGNOR" id="P29084"/>
<dbReference type="BioGRID-ORCS" id="2961">
    <property type="hits" value="776 hits in 1171 CRISPR screens"/>
</dbReference>
<dbReference type="CD-CODE" id="91857CE7">
    <property type="entry name" value="Nucleolus"/>
</dbReference>
<dbReference type="ChiTaRS" id="GTF2E2">
    <property type="organism name" value="human"/>
</dbReference>
<dbReference type="EvolutionaryTrace" id="P29084"/>
<dbReference type="GeneWiki" id="GTF2E2"/>
<dbReference type="GenomeRNAi" id="2961"/>
<dbReference type="Pharos" id="P29084">
    <property type="development level" value="Tbio"/>
</dbReference>
<dbReference type="PRO" id="PR:P29084"/>
<dbReference type="Proteomes" id="UP000005640">
    <property type="component" value="Chromosome 8"/>
</dbReference>
<dbReference type="RNAct" id="P29084">
    <property type="molecule type" value="protein"/>
</dbReference>
<dbReference type="Bgee" id="ENSG00000197265">
    <property type="expression patterns" value="Expressed in adrenal tissue and 189 other cell types or tissues"/>
</dbReference>
<dbReference type="ExpressionAtlas" id="P29084">
    <property type="expression patterns" value="baseline and differential"/>
</dbReference>
<dbReference type="GO" id="GO:0005829">
    <property type="term" value="C:cytosol"/>
    <property type="evidence" value="ECO:0000314"/>
    <property type="project" value="HPA"/>
</dbReference>
<dbReference type="GO" id="GO:0005654">
    <property type="term" value="C:nucleoplasm"/>
    <property type="evidence" value="ECO:0000314"/>
    <property type="project" value="HPA"/>
</dbReference>
<dbReference type="GO" id="GO:0005669">
    <property type="term" value="C:transcription factor TFIID complex"/>
    <property type="evidence" value="ECO:0000314"/>
    <property type="project" value="UniProtKB"/>
</dbReference>
<dbReference type="GO" id="GO:0005673">
    <property type="term" value="C:transcription factor TFIIE complex"/>
    <property type="evidence" value="ECO:0000318"/>
    <property type="project" value="GO_Central"/>
</dbReference>
<dbReference type="GO" id="GO:0003677">
    <property type="term" value="F:DNA binding"/>
    <property type="evidence" value="ECO:0007669"/>
    <property type="project" value="UniProtKB-KW"/>
</dbReference>
<dbReference type="GO" id="GO:0003723">
    <property type="term" value="F:RNA binding"/>
    <property type="evidence" value="ECO:0007005"/>
    <property type="project" value="UniProtKB"/>
</dbReference>
<dbReference type="GO" id="GO:0016251">
    <property type="term" value="F:RNA polymerase II general transcription initiation factor activity"/>
    <property type="evidence" value="ECO:0000314"/>
    <property type="project" value="ARUK-UCL"/>
</dbReference>
<dbReference type="GO" id="GO:0006366">
    <property type="term" value="P:transcription by RNA polymerase II"/>
    <property type="evidence" value="ECO:0000314"/>
    <property type="project" value="ARUK-UCL"/>
</dbReference>
<dbReference type="GO" id="GO:0006367">
    <property type="term" value="P:transcription initiation at RNA polymerase II promoter"/>
    <property type="evidence" value="ECO:0000318"/>
    <property type="project" value="GO_Central"/>
</dbReference>
<dbReference type="CDD" id="cd07977">
    <property type="entry name" value="TFIIE_beta_winged_helix"/>
    <property type="match status" value="1"/>
</dbReference>
<dbReference type="FunFam" id="1.10.10.10:FF:000177">
    <property type="entry name" value="Transcription initiation factor IIE subunit beta"/>
    <property type="match status" value="1"/>
</dbReference>
<dbReference type="Gene3D" id="1.10.10.10">
    <property type="entry name" value="Winged helix-like DNA-binding domain superfamily/Winged helix DNA-binding domain"/>
    <property type="match status" value="1"/>
</dbReference>
<dbReference type="InterPro" id="IPR040501">
    <property type="entry name" value="TFA2_Winged_2"/>
</dbReference>
<dbReference type="InterPro" id="IPR016656">
    <property type="entry name" value="TFIIE-bsu"/>
</dbReference>
<dbReference type="InterPro" id="IPR003166">
    <property type="entry name" value="TFIIE_bsu_DNA-bd"/>
</dbReference>
<dbReference type="InterPro" id="IPR036388">
    <property type="entry name" value="WH-like_DNA-bd_sf"/>
</dbReference>
<dbReference type="InterPro" id="IPR036390">
    <property type="entry name" value="WH_DNA-bd_sf"/>
</dbReference>
<dbReference type="PANTHER" id="PTHR12716:SF8">
    <property type="entry name" value="TRANSCRIPTION INITIATION FACTOR IIE SUBUNIT BETA"/>
    <property type="match status" value="1"/>
</dbReference>
<dbReference type="PANTHER" id="PTHR12716">
    <property type="entry name" value="TRANSCRIPTION INITIATION FACTOR IIE, BETA SUBUNIT"/>
    <property type="match status" value="1"/>
</dbReference>
<dbReference type="Pfam" id="PF18121">
    <property type="entry name" value="TFA2_Winged_2"/>
    <property type="match status" value="1"/>
</dbReference>
<dbReference type="Pfam" id="PF02186">
    <property type="entry name" value="TFIIE_beta"/>
    <property type="match status" value="1"/>
</dbReference>
<dbReference type="PIRSF" id="PIRSF016398">
    <property type="entry name" value="TFIIE-beta"/>
    <property type="match status" value="1"/>
</dbReference>
<dbReference type="SUPFAM" id="SSF46785">
    <property type="entry name" value="Winged helix' DNA-binding domain"/>
    <property type="match status" value="1"/>
</dbReference>
<dbReference type="PROSITE" id="PS51351">
    <property type="entry name" value="TFIIE_BETA_C"/>
    <property type="match status" value="1"/>
</dbReference>
<proteinExistence type="evidence at protein level"/>
<organism>
    <name type="scientific">Homo sapiens</name>
    <name type="common">Human</name>
    <dbReference type="NCBI Taxonomy" id="9606"/>
    <lineage>
        <taxon>Eukaryota</taxon>
        <taxon>Metazoa</taxon>
        <taxon>Chordata</taxon>
        <taxon>Craniata</taxon>
        <taxon>Vertebrata</taxon>
        <taxon>Euteleostomi</taxon>
        <taxon>Mammalia</taxon>
        <taxon>Eutheria</taxon>
        <taxon>Euarchontoglires</taxon>
        <taxon>Primates</taxon>
        <taxon>Haplorrhini</taxon>
        <taxon>Catarrhini</taxon>
        <taxon>Hominidae</taxon>
        <taxon>Homo</taxon>
    </lineage>
</organism>
<protein>
    <recommendedName>
        <fullName>Transcription initiation factor IIE subunit beta</fullName>
        <shortName>TFIIE-beta</shortName>
    </recommendedName>
    <alternativeName>
        <fullName>General transcription factor IIE subunit 2</fullName>
    </alternativeName>
</protein>
<gene>
    <name type="primary">GTF2E2</name>
    <name type="synonym">TF2E2</name>
</gene>
<evidence type="ECO:0000250" key="1">
    <source>
        <dbReference type="UniProtKB" id="Q9D902"/>
    </source>
</evidence>
<evidence type="ECO:0000255" key="2">
    <source>
        <dbReference type="PROSITE-ProRule" id="PRU00682"/>
    </source>
</evidence>
<evidence type="ECO:0000256" key="3">
    <source>
        <dbReference type="SAM" id="MobiDB-lite"/>
    </source>
</evidence>
<evidence type="ECO:0000269" key="4">
    <source>
    </source>
</evidence>
<evidence type="ECO:0000269" key="5">
    <source>
    </source>
</evidence>
<evidence type="ECO:0000269" key="6">
    <source>
    </source>
</evidence>
<evidence type="ECO:0000269" key="7">
    <source>
    </source>
</evidence>
<evidence type="ECO:0000269" key="8">
    <source>
    </source>
</evidence>
<evidence type="ECO:0000269" key="9">
    <source>
    </source>
</evidence>
<evidence type="ECO:0000269" key="10">
    <source>
    </source>
</evidence>
<evidence type="ECO:0000305" key="11"/>
<evidence type="ECO:0007744" key="12">
    <source>
    </source>
</evidence>
<evidence type="ECO:0007744" key="13">
    <source>
    </source>
</evidence>
<evidence type="ECO:0007829" key="14">
    <source>
        <dbReference type="PDB" id="1D8K"/>
    </source>
</evidence>
<evidence type="ECO:0007829" key="15">
    <source>
        <dbReference type="PDB" id="5GPY"/>
    </source>
</evidence>
<evidence type="ECO:0007829" key="16">
    <source>
        <dbReference type="PDB" id="7NVU"/>
    </source>
</evidence>
<evidence type="ECO:0007829" key="17">
    <source>
        <dbReference type="PDB" id="8S55"/>
    </source>
</evidence>
<name>T2EB_HUMAN</name>